<evidence type="ECO:0000250" key="1">
    <source>
        <dbReference type="UniProtKB" id="P60301"/>
    </source>
</evidence>
<evidence type="ECO:0000269" key="2">
    <source>
    </source>
</evidence>
<evidence type="ECO:0000269" key="3">
    <source>
    </source>
</evidence>
<evidence type="ECO:0000269" key="4">
    <source>
    </source>
</evidence>
<evidence type="ECO:0000269" key="5">
    <source>
    </source>
</evidence>
<evidence type="ECO:0000303" key="6">
    <source>
    </source>
</evidence>
<evidence type="ECO:0000303" key="7">
    <source>
    </source>
</evidence>
<evidence type="ECO:0000303" key="8">
    <source>
    </source>
</evidence>
<evidence type="ECO:0000305" key="9"/>
<evidence type="ECO:0000305" key="10">
    <source>
    </source>
</evidence>
<feature type="chain" id="PRO_0000093498" description="Cytotoxin 1" evidence="2">
    <location>
        <begin position="1"/>
        <end position="60"/>
    </location>
</feature>
<feature type="disulfide bond" evidence="1">
    <location>
        <begin position="3"/>
        <end position="21"/>
    </location>
</feature>
<feature type="disulfide bond" evidence="1">
    <location>
        <begin position="14"/>
        <end position="38"/>
    </location>
</feature>
<feature type="disulfide bond" evidence="1">
    <location>
        <begin position="42"/>
        <end position="53"/>
    </location>
</feature>
<feature type="disulfide bond" evidence="1">
    <location>
        <begin position="54"/>
        <end position="59"/>
    </location>
</feature>
<feature type="mutagenesis site" description="In CTX-I(41-60); no change in cytotoxic activity on INS-1E cells, decrease in intracellular calcium release, no change in insulin secretion in absence of glucose, decrease in insulin secretion in presence of glucose; when associated with K-52. In [Lys(52)]-CTX-I(41-60); no change in cytotoxic activity on INS-1E cells, no change in intracellular calcium release, no change in insulin secretion in absence of glucose, decrease in insulin secretion in presence of glucose." evidence="5">
    <location>
        <begin position="1"/>
        <end position="40"/>
    </location>
</feature>
<feature type="mutagenesis site" description="In CTX-I(1-39); gain in cytotoxic activity on INS-1E cells." evidence="5">
    <location>
        <begin position="40"/>
        <end position="60"/>
    </location>
</feature>
<feature type="mutagenesis site" description="In [Lys(52)]-CTX-I(41-60); no change in cytotoxic activity on INS-1E cells, no change in intracellular calcium release, no change in insulin secretion in absence of glucose, decrease in insulin secretion in presence of glucose; when associated with 1-L--D-40 DEL." evidence="5">
    <original>V</original>
    <variation>K</variation>
    <location>
        <position position="52"/>
    </location>
</feature>
<proteinExistence type="evidence at protein level"/>
<organism>
    <name type="scientific">Naja kaouthia</name>
    <name type="common">Monocled cobra</name>
    <name type="synonym">Naja siamensis</name>
    <dbReference type="NCBI Taxonomy" id="8649"/>
    <lineage>
        <taxon>Eukaryota</taxon>
        <taxon>Metazoa</taxon>
        <taxon>Chordata</taxon>
        <taxon>Craniata</taxon>
        <taxon>Vertebrata</taxon>
        <taxon>Euteleostomi</taxon>
        <taxon>Lepidosauria</taxon>
        <taxon>Squamata</taxon>
        <taxon>Bifurcata</taxon>
        <taxon>Unidentata</taxon>
        <taxon>Episquamata</taxon>
        <taxon>Toxicofera</taxon>
        <taxon>Serpentes</taxon>
        <taxon>Colubroidea</taxon>
        <taxon>Elapidae</taxon>
        <taxon>Elapinae</taxon>
        <taxon>Naja</taxon>
    </lineage>
</organism>
<sequence length="60" mass="6701">LKCNKLIPIASKTCPAGKNLCYKMFMMSDLTIPVKRGCIDVCPKNSLLVKYVCCNTDRCN</sequence>
<protein>
    <recommendedName>
        <fullName evidence="7">Cytotoxin 1</fullName>
        <shortName>CTX1</shortName>
        <shortName evidence="7">CX1</shortName>
    </recommendedName>
    <alternativeName>
        <fullName evidence="6">Cardiotoxin F8</fullName>
    </alternativeName>
    <alternativeName>
        <fullName evidence="8">Cardiotoxin-I</fullName>
        <shortName evidence="8">CTX-I</shortName>
    </alternativeName>
    <alternativeName>
        <fullName>Toxin CM-6</fullName>
    </alternativeName>
</protein>
<dbReference type="PIR" id="A90389">
    <property type="entry name" value="H3NJ1K"/>
</dbReference>
<dbReference type="SMR" id="P60305"/>
<dbReference type="TCDB" id="1.C.74.1.1">
    <property type="family name" value="the snake cytotoxin (sct) family"/>
</dbReference>
<dbReference type="GO" id="GO:0005576">
    <property type="term" value="C:extracellular region"/>
    <property type="evidence" value="ECO:0007669"/>
    <property type="project" value="UniProtKB-SubCell"/>
</dbReference>
<dbReference type="GO" id="GO:0016020">
    <property type="term" value="C:membrane"/>
    <property type="evidence" value="ECO:0007669"/>
    <property type="project" value="UniProtKB-KW"/>
</dbReference>
<dbReference type="GO" id="GO:0044218">
    <property type="term" value="C:other organism cell membrane"/>
    <property type="evidence" value="ECO:0007669"/>
    <property type="project" value="UniProtKB-KW"/>
</dbReference>
<dbReference type="GO" id="GO:0015459">
    <property type="term" value="F:potassium channel regulator activity"/>
    <property type="evidence" value="ECO:0007669"/>
    <property type="project" value="UniProtKB-KW"/>
</dbReference>
<dbReference type="GO" id="GO:0090729">
    <property type="term" value="F:toxin activity"/>
    <property type="evidence" value="ECO:0007669"/>
    <property type="project" value="UniProtKB-KW"/>
</dbReference>
<dbReference type="GO" id="GO:0031640">
    <property type="term" value="P:killing of cells of another organism"/>
    <property type="evidence" value="ECO:0007669"/>
    <property type="project" value="UniProtKB-KW"/>
</dbReference>
<dbReference type="CDD" id="cd00206">
    <property type="entry name" value="TFP_snake_toxin"/>
    <property type="match status" value="1"/>
</dbReference>
<dbReference type="FunFam" id="2.10.60.10:FF:000024">
    <property type="entry name" value="Cytotoxin 1"/>
    <property type="match status" value="1"/>
</dbReference>
<dbReference type="Gene3D" id="2.10.60.10">
    <property type="entry name" value="CD59"/>
    <property type="match status" value="1"/>
</dbReference>
<dbReference type="InterPro" id="IPR003572">
    <property type="entry name" value="Cytotoxin_Cobra"/>
</dbReference>
<dbReference type="InterPro" id="IPR003571">
    <property type="entry name" value="Snake_3FTx"/>
</dbReference>
<dbReference type="InterPro" id="IPR045860">
    <property type="entry name" value="Snake_toxin-like_sf"/>
</dbReference>
<dbReference type="InterPro" id="IPR018354">
    <property type="entry name" value="Snake_toxin_con_site"/>
</dbReference>
<dbReference type="InterPro" id="IPR054131">
    <property type="entry name" value="Toxin_cobra-type"/>
</dbReference>
<dbReference type="Pfam" id="PF21947">
    <property type="entry name" value="Toxin_cobra-type"/>
    <property type="match status" value="1"/>
</dbReference>
<dbReference type="PRINTS" id="PR00282">
    <property type="entry name" value="CYTOTOXIN"/>
</dbReference>
<dbReference type="SUPFAM" id="SSF57302">
    <property type="entry name" value="Snake toxin-like"/>
    <property type="match status" value="1"/>
</dbReference>
<dbReference type="PROSITE" id="PS00272">
    <property type="entry name" value="SNAKE_TOXIN"/>
    <property type="match status" value="1"/>
</dbReference>
<comment type="function">
    <text evidence="3 4 5">Monomer: shows cytolytic activity (apoptosis is induced in C2C12 cells, but no cytotoxicity is observed on INS-1E) (PubMed:18381281, PubMed:22807058). In addition, this toxin shows insulinotropic activity that may be mediated by the modulation of potassium channels (Kv) (PubMed:22807058). It induces the increase of intracellular calcium release (PubMed:24552570). It induces insulin secretion from rat INS-1E cells in absence and in presence of glucose, without affecting cell viability and integrity (PubMed:22807058). In presence of glucose, the insulinotropic activity is increased, suggesting a possible synergistic effect with glucose (PubMed:22807058). Its insulinotropic activity does not involve GLP-1R signaling (PubMed:22807058, PubMed:24552570).</text>
</comment>
<comment type="function">
    <text evidence="3">Heterodimer: has no cytolytic activity, but retains most of the alpha-cobratoxin capacity to compete with alpha-bungarotoxin for binding to Torpedo and alpha-7/CHRNA7 nicotinic acetylcholine receptors (nAChRs) as well as to Lymnea stagnalis acetylcholine-binding protein.</text>
</comment>
<comment type="subunit">
    <text evidence="3">Monomer, or heterodimer with alpha-cobratoxin (AC P01391); disulfide-linked.</text>
</comment>
<comment type="subcellular location">
    <subcellularLocation>
        <location evidence="2">Secreted</location>
    </subcellularLocation>
    <subcellularLocation>
        <location evidence="1">Target cell membrane</location>
    </subcellularLocation>
</comment>
<comment type="tissue specificity">
    <text evidence="10">Expressed by the venom gland.</text>
</comment>
<comment type="toxic dose">
    <text evidence="2">LD(100) is 0.75 mg/kg by intravenous injection and 2.25 mg/kg by intraperitoneal injection.</text>
</comment>
<comment type="miscellaneous">
    <text evidence="4">Negative results: does not induce direct hemolysis of human erythrocytes and it also does not induce potent vasoconstriction.</text>
</comment>
<comment type="miscellaneous">
    <text evidence="9">Is classified as a S-type cytotoxin, since a serine residue stands at position 28 (Ser-29 in standard classification).</text>
</comment>
<comment type="similarity">
    <text evidence="9">Belongs to the three-finger toxin family. Short-chain subfamily. Type IA cytotoxin sub-subfamily.</text>
</comment>
<accession>P60305</accession>
<accession>P01449</accession>
<accession>P01450</accession>
<name>3SA8_NAJKA</name>
<reference key="1">
    <citation type="journal article" date="1975" name="Biochemistry">
        <title>The complete amino acid sequence of a cardiotoxin from the venom of Naja naja (Cambodian Cobra).</title>
        <authorList>
            <person name="Fryklund L."/>
            <person name="Eaker D."/>
        </authorList>
    </citation>
    <scope>PROTEIN SEQUENCE</scope>
    <scope>SUBCELLULAR LOCATION</scope>
    <scope>TOXIC DOSE</scope>
    <source>
        <tissue>Venom</tissue>
    </source>
</reference>
<reference key="2">
    <citation type="journal article" date="1980" name="Toxicon">
        <title>The complete primary structures of three cytotoxins (CM-6, CM-7 and CM-7A) from Naja naja kaouthia (Siamese cobra) snake venom.</title>
        <authorList>
            <person name="Joubert F.J."/>
            <person name="Taljaard N."/>
        </authorList>
    </citation>
    <scope>PROTEIN SEQUENCE</scope>
    <source>
        <tissue>Venom</tissue>
    </source>
</reference>
<reference key="3">
    <citation type="journal article" date="1988" name="Biochim. Biophys. Acta">
        <title>Amino-acid sequences of four cytotoxins (cytotoxins I, II, III and IV) purified from the venom of the Thailand cobra, Naja naja siamensis.</title>
        <authorList>
            <person name="Ohkura K."/>
            <person name="Inoue S."/>
            <person name="Ikeda K."/>
            <person name="Hayashi K."/>
        </authorList>
    </citation>
    <scope>PROTEIN SEQUENCE</scope>
    <source>
        <tissue>Venom</tissue>
    </source>
</reference>
<reference key="4">
    <citation type="journal article" date="2008" name="J. Biol. Chem.">
        <title>Naturally occurring disulfide-bound dimers of three-fingered toxins: a paradigm for biological activity diversification.</title>
        <authorList>
            <person name="Osipov A.V."/>
            <person name="Kasheverov I.E."/>
            <person name="Makarova Y.V."/>
            <person name="Starkov V.G."/>
            <person name="Vorontsova O.V."/>
            <person name="Ziganshin R.K."/>
            <person name="Andreeva T.V."/>
            <person name="Serebryakova M.V."/>
            <person name="Benoit A."/>
            <person name="Hogg R.C."/>
            <person name="Bertrand D."/>
            <person name="Tsetlin V.I."/>
            <person name="Utkin Y.N."/>
        </authorList>
    </citation>
    <scope>PARTIAL PROTEIN SEQUENCE</scope>
    <scope>IDENTIFICATION BY MASS SPECTROMETRY</scope>
    <scope>FUNCTION</scope>
    <scope>SUBUNIT</scope>
    <source>
        <tissue>Venom</tissue>
    </source>
</reference>
<reference key="5">
    <citation type="journal article" date="2012" name="ChemBioChem">
        <title>Cardiotoxin-I: an unexpectedly potent insulinotropic agent.</title>
        <authorList>
            <person name="Nguyen T.T."/>
            <person name="Folch B."/>
            <person name="Letourneau M."/>
            <person name="Vaudry D."/>
            <person name="Truong N.H."/>
            <person name="Doucet N."/>
            <person name="Chatenet D."/>
            <person name="Fournier A."/>
        </authorList>
    </citation>
    <scope>FUNCTION</scope>
    <scope>IDENTIFICATION BY MASS SPECTROMETRY</scope>
    <source>
        <tissue>Venom</tissue>
    </source>
</reference>
<reference key="6">
    <citation type="journal article" date="2014" name="J. Med. Chem.">
        <title>Design of a truncated cardiotoxin-I analogue with potent insulinotropic activity.</title>
        <authorList>
            <person name="Nguyen T.T."/>
            <person name="Folch B."/>
            <person name="Letourneau M."/>
            <person name="Truong N.H."/>
            <person name="Doucet N."/>
            <person name="Fournier A."/>
            <person name="Chatenet D."/>
        </authorList>
    </citation>
    <scope>FUNCTION</scope>
    <scope>MUTAGENESIS OF 1-LEU--ASP-40; 40-ASP--ASN-60 AND VAL-52</scope>
    <scope>SYNTHESIS</scope>
</reference>
<keyword id="KW-0123">Cardiotoxin</keyword>
<keyword id="KW-0204">Cytolysis</keyword>
<keyword id="KW-0903">Direct protein sequencing</keyword>
<keyword id="KW-1015">Disulfide bond</keyword>
<keyword id="KW-0872">Ion channel impairing toxin</keyword>
<keyword id="KW-0472">Membrane</keyword>
<keyword id="KW-0632">Potassium channel impairing toxin</keyword>
<keyword id="KW-0964">Secreted</keyword>
<keyword id="KW-1052">Target cell membrane</keyword>
<keyword id="KW-1053">Target membrane</keyword>
<keyword id="KW-0800">Toxin</keyword>
<keyword id="KW-1220">Voltage-gated potassium channel impairing toxin</keyword>